<accession>Q3SRG6</accession>
<name>SYP_NITWN</name>
<dbReference type="EC" id="6.1.1.15" evidence="1"/>
<dbReference type="EMBL" id="CP000115">
    <property type="protein sequence ID" value="ABA05125.1"/>
    <property type="molecule type" value="Genomic_DNA"/>
</dbReference>
<dbReference type="RefSeq" id="WP_011315121.1">
    <property type="nucleotide sequence ID" value="NC_007406.1"/>
</dbReference>
<dbReference type="SMR" id="Q3SRG6"/>
<dbReference type="STRING" id="323098.Nwi_1865"/>
<dbReference type="KEGG" id="nwi:Nwi_1865"/>
<dbReference type="eggNOG" id="COG0442">
    <property type="taxonomic scope" value="Bacteria"/>
</dbReference>
<dbReference type="HOGENOM" id="CLU_016739_4_2_5"/>
<dbReference type="OrthoDB" id="9809052at2"/>
<dbReference type="Proteomes" id="UP000002531">
    <property type="component" value="Chromosome"/>
</dbReference>
<dbReference type="GO" id="GO:0005829">
    <property type="term" value="C:cytosol"/>
    <property type="evidence" value="ECO:0007669"/>
    <property type="project" value="TreeGrafter"/>
</dbReference>
<dbReference type="GO" id="GO:0005524">
    <property type="term" value="F:ATP binding"/>
    <property type="evidence" value="ECO:0007669"/>
    <property type="project" value="UniProtKB-UniRule"/>
</dbReference>
<dbReference type="GO" id="GO:0004827">
    <property type="term" value="F:proline-tRNA ligase activity"/>
    <property type="evidence" value="ECO:0007669"/>
    <property type="project" value="UniProtKB-UniRule"/>
</dbReference>
<dbReference type="GO" id="GO:0006433">
    <property type="term" value="P:prolyl-tRNA aminoacylation"/>
    <property type="evidence" value="ECO:0007669"/>
    <property type="project" value="UniProtKB-UniRule"/>
</dbReference>
<dbReference type="CDD" id="cd00861">
    <property type="entry name" value="ProRS_anticodon_short"/>
    <property type="match status" value="1"/>
</dbReference>
<dbReference type="CDD" id="cd00779">
    <property type="entry name" value="ProRS_core_prok"/>
    <property type="match status" value="1"/>
</dbReference>
<dbReference type="FunFam" id="3.30.930.10:FF:000042">
    <property type="entry name" value="probable proline--tRNA ligase, mitochondrial"/>
    <property type="match status" value="1"/>
</dbReference>
<dbReference type="FunFam" id="3.40.50.800:FF:000032">
    <property type="entry name" value="Proline--tRNA ligase"/>
    <property type="match status" value="1"/>
</dbReference>
<dbReference type="Gene3D" id="3.40.50.800">
    <property type="entry name" value="Anticodon-binding domain"/>
    <property type="match status" value="1"/>
</dbReference>
<dbReference type="Gene3D" id="3.30.930.10">
    <property type="entry name" value="Bira Bifunctional Protein, Domain 2"/>
    <property type="match status" value="1"/>
</dbReference>
<dbReference type="HAMAP" id="MF_01570">
    <property type="entry name" value="Pro_tRNA_synth_type2"/>
    <property type="match status" value="1"/>
</dbReference>
<dbReference type="InterPro" id="IPR002314">
    <property type="entry name" value="aa-tRNA-synt_IIb"/>
</dbReference>
<dbReference type="InterPro" id="IPR006195">
    <property type="entry name" value="aa-tRNA-synth_II"/>
</dbReference>
<dbReference type="InterPro" id="IPR045864">
    <property type="entry name" value="aa-tRNA-synth_II/BPL/LPL"/>
</dbReference>
<dbReference type="InterPro" id="IPR004154">
    <property type="entry name" value="Anticodon-bd"/>
</dbReference>
<dbReference type="InterPro" id="IPR036621">
    <property type="entry name" value="Anticodon-bd_dom_sf"/>
</dbReference>
<dbReference type="InterPro" id="IPR002316">
    <property type="entry name" value="Pro-tRNA-ligase_IIa"/>
</dbReference>
<dbReference type="InterPro" id="IPR004500">
    <property type="entry name" value="Pro-tRNA-synth_IIa_bac-type"/>
</dbReference>
<dbReference type="InterPro" id="IPR050062">
    <property type="entry name" value="Pro-tRNA_synthetase"/>
</dbReference>
<dbReference type="InterPro" id="IPR023716">
    <property type="entry name" value="Prolyl-tRNA_ligase_IIa_type2"/>
</dbReference>
<dbReference type="InterPro" id="IPR044140">
    <property type="entry name" value="ProRS_anticodon_short"/>
</dbReference>
<dbReference type="InterPro" id="IPR033730">
    <property type="entry name" value="ProRS_core_prok"/>
</dbReference>
<dbReference type="NCBIfam" id="NF008979">
    <property type="entry name" value="PRK12325.1"/>
    <property type="match status" value="1"/>
</dbReference>
<dbReference type="NCBIfam" id="TIGR00409">
    <property type="entry name" value="proS_fam_II"/>
    <property type="match status" value="1"/>
</dbReference>
<dbReference type="PANTHER" id="PTHR42753">
    <property type="entry name" value="MITOCHONDRIAL RIBOSOME PROTEIN L39/PROLYL-TRNA LIGASE FAMILY MEMBER"/>
    <property type="match status" value="1"/>
</dbReference>
<dbReference type="PANTHER" id="PTHR42753:SF2">
    <property type="entry name" value="PROLINE--TRNA LIGASE"/>
    <property type="match status" value="1"/>
</dbReference>
<dbReference type="Pfam" id="PF03129">
    <property type="entry name" value="HGTP_anticodon"/>
    <property type="match status" value="1"/>
</dbReference>
<dbReference type="Pfam" id="PF00587">
    <property type="entry name" value="tRNA-synt_2b"/>
    <property type="match status" value="1"/>
</dbReference>
<dbReference type="PRINTS" id="PR01046">
    <property type="entry name" value="TRNASYNTHPRO"/>
</dbReference>
<dbReference type="SUPFAM" id="SSF52954">
    <property type="entry name" value="Class II aaRS ABD-related"/>
    <property type="match status" value="1"/>
</dbReference>
<dbReference type="SUPFAM" id="SSF55681">
    <property type="entry name" value="Class II aaRS and biotin synthetases"/>
    <property type="match status" value="1"/>
</dbReference>
<dbReference type="PROSITE" id="PS50862">
    <property type="entry name" value="AA_TRNA_LIGASE_II"/>
    <property type="match status" value="1"/>
</dbReference>
<reference key="1">
    <citation type="journal article" date="2006" name="Appl. Environ. Microbiol.">
        <title>Genome sequence of the chemolithoautotrophic nitrite-oxidizing bacterium Nitrobacter winogradskyi Nb-255.</title>
        <authorList>
            <person name="Starkenburg S.R."/>
            <person name="Chain P.S.G."/>
            <person name="Sayavedra-Soto L.A."/>
            <person name="Hauser L."/>
            <person name="Land M.L."/>
            <person name="Larimer F.W."/>
            <person name="Malfatti S.A."/>
            <person name="Klotz M.G."/>
            <person name="Bottomley P.J."/>
            <person name="Arp D.J."/>
            <person name="Hickey W.J."/>
        </authorList>
    </citation>
    <scope>NUCLEOTIDE SEQUENCE [LARGE SCALE GENOMIC DNA]</scope>
    <source>
        <strain>ATCC 25391 / DSM 10237 / CIP 104748 / NCIMB 11846 / Nb-255</strain>
    </source>
</reference>
<keyword id="KW-0030">Aminoacyl-tRNA synthetase</keyword>
<keyword id="KW-0067">ATP-binding</keyword>
<keyword id="KW-0963">Cytoplasm</keyword>
<keyword id="KW-0436">Ligase</keyword>
<keyword id="KW-0547">Nucleotide-binding</keyword>
<keyword id="KW-0648">Protein biosynthesis</keyword>
<keyword id="KW-1185">Reference proteome</keyword>
<proteinExistence type="inferred from homology"/>
<gene>
    <name evidence="1" type="primary">proS</name>
    <name type="ordered locus">Nwi_1865</name>
</gene>
<organism>
    <name type="scientific">Nitrobacter winogradskyi (strain ATCC 25391 / DSM 10237 / CIP 104748 / NCIMB 11846 / Nb-255)</name>
    <dbReference type="NCBI Taxonomy" id="323098"/>
    <lineage>
        <taxon>Bacteria</taxon>
        <taxon>Pseudomonadati</taxon>
        <taxon>Pseudomonadota</taxon>
        <taxon>Alphaproteobacteria</taxon>
        <taxon>Hyphomicrobiales</taxon>
        <taxon>Nitrobacteraceae</taxon>
        <taxon>Nitrobacter</taxon>
    </lineage>
</organism>
<evidence type="ECO:0000255" key="1">
    <source>
        <dbReference type="HAMAP-Rule" id="MF_01570"/>
    </source>
</evidence>
<protein>
    <recommendedName>
        <fullName evidence="1">Proline--tRNA ligase</fullName>
        <ecNumber evidence="1">6.1.1.15</ecNumber>
    </recommendedName>
    <alternativeName>
        <fullName evidence="1">Prolyl-tRNA synthetase</fullName>
        <shortName evidence="1">ProRS</shortName>
    </alternativeName>
</protein>
<sequence>MRLSRFFLPILKETPKEAEIVSHRLMLRAGMIRQEAAGIYAWLPLGLRVLKKIEAIVREEQNRAGAIELLMPTLQLADLWRESGRYDAYGPEMLRIQDRHKRELLYGPTNEEMITEIFRGYIRSYKSLPLNLYHIQWKFRDEQRPRFGVMRGREFLMKDAYSFDIDEAGARRSYNRMFVAYLRTFARMGLKAIPMRAETGPIGGDLSHEFIVLAETGESGVYIDKDVLDLPIPGTEVDYDGDLTPIVRQWTTAYAATEDVHDGPRYEREVPEERRVHTRGIEVGQIFYFGTKYSESMKALVTGTDGVEQPIHGGSYGVGVSRLVGAIIEACHDEAGIKWPEAVAPFTVAILNLKQGASDTDEACERIYRELSARGVDVLYDDTDQRAGAKFATADLIGSPWQVMVGPKGLAEGKVEIKRRGDGSRENVALEDAVARLMA</sequence>
<comment type="function">
    <text evidence="1">Catalyzes the attachment of proline to tRNA(Pro) in a two-step reaction: proline is first activated by ATP to form Pro-AMP and then transferred to the acceptor end of tRNA(Pro).</text>
</comment>
<comment type="catalytic activity">
    <reaction evidence="1">
        <text>tRNA(Pro) + L-proline + ATP = L-prolyl-tRNA(Pro) + AMP + diphosphate</text>
        <dbReference type="Rhea" id="RHEA:14305"/>
        <dbReference type="Rhea" id="RHEA-COMP:9700"/>
        <dbReference type="Rhea" id="RHEA-COMP:9702"/>
        <dbReference type="ChEBI" id="CHEBI:30616"/>
        <dbReference type="ChEBI" id="CHEBI:33019"/>
        <dbReference type="ChEBI" id="CHEBI:60039"/>
        <dbReference type="ChEBI" id="CHEBI:78442"/>
        <dbReference type="ChEBI" id="CHEBI:78532"/>
        <dbReference type="ChEBI" id="CHEBI:456215"/>
        <dbReference type="EC" id="6.1.1.15"/>
    </reaction>
</comment>
<comment type="subunit">
    <text evidence="1">Homodimer.</text>
</comment>
<comment type="subcellular location">
    <subcellularLocation>
        <location evidence="1">Cytoplasm</location>
    </subcellularLocation>
</comment>
<comment type="similarity">
    <text evidence="1">Belongs to the class-II aminoacyl-tRNA synthetase family. ProS type 2 subfamily.</text>
</comment>
<feature type="chain" id="PRO_0000248904" description="Proline--tRNA ligase">
    <location>
        <begin position="1"/>
        <end position="439"/>
    </location>
</feature>